<gene>
    <name evidence="2 31" type="primary">PSD1</name>
    <name evidence="42" type="ordered locus">YNL169C</name>
    <name type="ORF">N1692</name>
</gene>
<organism>
    <name type="scientific">Saccharomyces cerevisiae (strain ATCC 204508 / S288c)</name>
    <name type="common">Baker's yeast</name>
    <dbReference type="NCBI Taxonomy" id="559292"/>
    <lineage>
        <taxon>Eukaryota</taxon>
        <taxon>Fungi</taxon>
        <taxon>Dikarya</taxon>
        <taxon>Ascomycota</taxon>
        <taxon>Saccharomycotina</taxon>
        <taxon>Saccharomycetes</taxon>
        <taxon>Saccharomycetales</taxon>
        <taxon>Saccharomycetaceae</taxon>
        <taxon>Saccharomyces</taxon>
    </lineage>
</organism>
<reference key="1">
    <citation type="journal article" date="1993" name="J. Biol. Chem.">
        <title>Cloning of a gene (PSD1) encoding phosphatidylserine decarboxylase from Saccharomyces cerevisiae by complementation of an Escherichia coli mutant.</title>
        <authorList>
            <person name="Clancey C.J."/>
            <person name="Chang S.-C."/>
            <person name="Dowhan W."/>
        </authorList>
    </citation>
    <scope>NUCLEOTIDE SEQUENCE [GENOMIC DNA]</scope>
    <scope>FUNCTION</scope>
    <source>
        <strain>ATCC 204510 / AB320</strain>
    </source>
</reference>
<reference key="2">
    <citation type="journal article" date="1993" name="J. Biol. Chem.">
        <title>Phosphatidylserine decarboxylase from Saccharomyces cerevisiae. Isolation of mutants, cloning of the gene, and creation of a null allele.</title>
        <authorList>
            <person name="Trotter P.J."/>
            <person name="Pedretti J."/>
            <person name="Voelker D.R."/>
        </authorList>
    </citation>
    <scope>NUCLEOTIDE SEQUENCE [GENOMIC DNA]</scope>
    <scope>FUNCTION</scope>
    <scope>PATHWAY</scope>
</reference>
<reference key="3">
    <citation type="journal article" date="1997" name="Nature">
        <title>The nucleotide sequence of Saccharomyces cerevisiae chromosome XIV and its evolutionary implications.</title>
        <authorList>
            <person name="Philippsen P."/>
            <person name="Kleine K."/>
            <person name="Poehlmann R."/>
            <person name="Duesterhoeft A."/>
            <person name="Hamberg K."/>
            <person name="Hegemann J.H."/>
            <person name="Obermaier B."/>
            <person name="Urrestarazu L.A."/>
            <person name="Aert R."/>
            <person name="Albermann K."/>
            <person name="Altmann R."/>
            <person name="Andre B."/>
            <person name="Baladron V."/>
            <person name="Ballesta J.P.G."/>
            <person name="Becam A.-M."/>
            <person name="Beinhauer J.D."/>
            <person name="Boskovic J."/>
            <person name="Buitrago M.J."/>
            <person name="Bussereau F."/>
            <person name="Coster F."/>
            <person name="Crouzet M."/>
            <person name="D'Angelo M."/>
            <person name="Dal Pero F."/>
            <person name="De Antoni A."/>
            <person name="del Rey F."/>
            <person name="Doignon F."/>
            <person name="Domdey H."/>
            <person name="Dubois E."/>
            <person name="Fiedler T.A."/>
            <person name="Fleig U."/>
            <person name="Floeth M."/>
            <person name="Fritz C."/>
            <person name="Gaillardin C."/>
            <person name="Garcia-Cantalejo J.M."/>
            <person name="Glansdorff N."/>
            <person name="Goffeau A."/>
            <person name="Gueldener U."/>
            <person name="Herbert C.J."/>
            <person name="Heumann K."/>
            <person name="Heuss-Neitzel D."/>
            <person name="Hilbert H."/>
            <person name="Hinni K."/>
            <person name="Iraqui Houssaini I."/>
            <person name="Jacquet M."/>
            <person name="Jimenez A."/>
            <person name="Jonniaux J.-L."/>
            <person name="Karpfinger-Hartl L."/>
            <person name="Lanfranchi G."/>
            <person name="Lepingle A."/>
            <person name="Levesque H."/>
            <person name="Lyck R."/>
            <person name="Maftahi M."/>
            <person name="Mallet L."/>
            <person name="Maurer C.T.C."/>
            <person name="Messenguy F."/>
            <person name="Mewes H.-W."/>
            <person name="Moestl D."/>
            <person name="Nasr F."/>
            <person name="Nicaud J.-M."/>
            <person name="Niedenthal R.K."/>
            <person name="Pandolfo D."/>
            <person name="Pierard A."/>
            <person name="Piravandi E."/>
            <person name="Planta R.J."/>
            <person name="Pohl T.M."/>
            <person name="Purnelle B."/>
            <person name="Rebischung C."/>
            <person name="Remacha M.A."/>
            <person name="Revuelta J.L."/>
            <person name="Rinke M."/>
            <person name="Saiz J.E."/>
            <person name="Sartorello F."/>
            <person name="Scherens B."/>
            <person name="Sen-Gupta M."/>
            <person name="Soler-Mira A."/>
            <person name="Urbanus J.H.M."/>
            <person name="Valle G."/>
            <person name="Van Dyck L."/>
            <person name="Verhasselt P."/>
            <person name="Vierendeels F."/>
            <person name="Vissers S."/>
            <person name="Voet M."/>
            <person name="Volckaert G."/>
            <person name="Wach A."/>
            <person name="Wambutt R."/>
            <person name="Wedler H."/>
            <person name="Zollner A."/>
            <person name="Hani J."/>
        </authorList>
    </citation>
    <scope>NUCLEOTIDE SEQUENCE [LARGE SCALE GENOMIC DNA]</scope>
    <source>
        <strain>ATCC 204508 / S288c</strain>
    </source>
</reference>
<reference key="4">
    <citation type="journal article" date="2014" name="G3 (Bethesda)">
        <title>The reference genome sequence of Saccharomyces cerevisiae: Then and now.</title>
        <authorList>
            <person name="Engel S.R."/>
            <person name="Dietrich F.S."/>
            <person name="Fisk D.G."/>
            <person name="Binkley G."/>
            <person name="Balakrishnan R."/>
            <person name="Costanzo M.C."/>
            <person name="Dwight S.S."/>
            <person name="Hitz B.C."/>
            <person name="Karra K."/>
            <person name="Nash R.S."/>
            <person name="Weng S."/>
            <person name="Wong E.D."/>
            <person name="Lloyd P."/>
            <person name="Skrzypek M.S."/>
            <person name="Miyasato S.R."/>
            <person name="Simison M."/>
            <person name="Cherry J.M."/>
        </authorList>
    </citation>
    <scope>GENOME REANNOTATION</scope>
    <source>
        <strain>ATCC 204508 / S288c</strain>
    </source>
</reference>
<reference key="5">
    <citation type="journal article" date="1996" name="Yeast">
        <title>The sequence of 36.8 kb from the left arm of chromosome XIV reveals 24 complete open reading frames: 18 correspond to new genes, one of which encodes a protein similar to the human myotonic dystrophy kinase.</title>
        <authorList>
            <person name="Nasr F."/>
            <person name="Becam A.-M."/>
            <person name="Herbert C.J."/>
        </authorList>
    </citation>
    <scope>NUCLEOTIDE SEQUENCE [GENOMIC DNA] OF 1-174</scope>
    <source>
        <strain>ATCC 96604 / S288c / FY1679</strain>
    </source>
</reference>
<reference key="6">
    <citation type="journal article" date="1984" name="J. Biol. Chem.">
        <title>Coordinate regulation of phosphatidylserine decarboxylase activity and phospholipid N-methylation in yeast.</title>
        <authorList>
            <person name="Carson M.A."/>
            <person name="Emala M."/>
            <person name="Hogsten P."/>
            <person name="Waechter C.J."/>
        </authorList>
    </citation>
    <scope>CATALYTIC ACTIVITY</scope>
</reference>
<reference key="7">
    <citation type="journal article" date="1986" name="J. Bacteriol.">
        <title>Subcellular and submitochondrial localization of phospholipid-synthesizing enzymes in Saccharomyces cerevisiae.</title>
        <authorList>
            <person name="Kuchler K."/>
            <person name="Daum G."/>
            <person name="Paltauf F."/>
        </authorList>
    </citation>
    <scope>SUBCELLULAR LOCATION</scope>
</reference>
<reference key="8">
    <citation type="journal article" date="1995" name="J. Biol. Chem.">
        <title>Synthesis and intracellular transport of aminoglycerophospholipids in permeabilized cells of the yeast, Saccharomyces cerevisiae.</title>
        <authorList>
            <person name="Achleitner G."/>
            <person name="Zweytick D."/>
            <person name="Trotter P.J."/>
            <person name="Voelker D.R."/>
            <person name="Daum G."/>
        </authorList>
    </citation>
    <scope>FUNCTION</scope>
</reference>
<reference key="9">
    <citation type="journal article" date="1997" name="J. Bacteriol.">
        <title>Regulation of yeast phospholipid biosynthetic genes in phosphatidylserine decarboxylase mutants.</title>
        <authorList>
            <person name="Griac P."/>
        </authorList>
    </citation>
    <scope>INDUCTION</scope>
    <scope>DISRUPTION PHENOTYPE</scope>
</reference>
<reference key="10">
    <citation type="journal article" date="2001" name="Mol. Biol. Cell">
        <title>Roles of phosphatidylethanolamine and of its several biosynthetic pathways in Saccharomyces cerevisiae.</title>
        <authorList>
            <person name="Birner R."/>
            <person name="Buergermeister M."/>
            <person name="Schneiter R."/>
            <person name="Daum G."/>
        </authorList>
    </citation>
    <scope>FUNCTION</scope>
</reference>
<reference key="11">
    <citation type="journal article" date="2003" name="Nature">
        <title>Global analysis of protein localization in budding yeast.</title>
        <authorList>
            <person name="Huh W.-K."/>
            <person name="Falvo J.V."/>
            <person name="Gerke L.C."/>
            <person name="Carroll A.S."/>
            <person name="Howson R.W."/>
            <person name="Weissman J.S."/>
            <person name="O'Shea E.K."/>
        </authorList>
    </citation>
    <scope>SUBCELLULAR LOCATION [LARGE SCALE ANALYSIS]</scope>
</reference>
<reference key="12">
    <citation type="journal article" date="2003" name="Nature">
        <title>Global analysis of protein expression in yeast.</title>
        <authorList>
            <person name="Ghaemmaghami S."/>
            <person name="Huh W.-K."/>
            <person name="Bower K."/>
            <person name="Howson R.W."/>
            <person name="Belle A."/>
            <person name="Dephoure N."/>
            <person name="O'Shea E.K."/>
            <person name="Weissman J.S."/>
        </authorList>
    </citation>
    <scope>LEVEL OF PROTEIN EXPRESSION [LARGE SCALE ANALYSIS]</scope>
</reference>
<reference key="13">
    <citation type="journal article" date="2003" name="Proc. Natl. Acad. Sci. U.S.A.">
        <title>The proteome of Saccharomyces cerevisiae mitochondria.</title>
        <authorList>
            <person name="Sickmann A."/>
            <person name="Reinders J."/>
            <person name="Wagner Y."/>
            <person name="Joppich C."/>
            <person name="Zahedi R.P."/>
            <person name="Meyer H.E."/>
            <person name="Schoenfisch B."/>
            <person name="Perschil I."/>
            <person name="Chacinska A."/>
            <person name="Guiard B."/>
            <person name="Rehling P."/>
            <person name="Pfanner N."/>
            <person name="Meisinger C."/>
        </authorList>
    </citation>
    <scope>SUBCELLULAR LOCATION [LARGE SCALE ANALYSIS]</scope>
    <source>
        <strain>ATCC 76625 / YPH499</strain>
    </source>
</reference>
<reference key="14">
    <citation type="journal article" date="2007" name="FEBS J.">
        <title>The phosphatidylethanolamine level of yeast mitochondria is affected by the mitochondrial components Oxa1p and Yme1p.</title>
        <authorList>
            <person name="Nebauer R."/>
            <person name="Schuiki I."/>
            <person name="Kulterer B."/>
            <person name="Trajanoski Z."/>
            <person name="Daum G."/>
        </authorList>
    </citation>
    <scope>FUNCTION</scope>
    <scope>CATALYTIC ACTIVITY</scope>
    <scope>PROTEOLYTIC PROCESSING</scope>
</reference>
<reference key="15">
    <citation type="journal article" date="2008" name="Mol. Cell. Biol.">
        <title>Evidence for the bifunctional nature of mitochondrial phosphatidylserine decarboxylase: role in Pdr3-dependent retrograde regulation of PDR5 expression.</title>
        <authorList>
            <person name="Gulshan K."/>
            <person name="Schmidt J.A."/>
            <person name="Shahi P."/>
            <person name="Moye-Rowley W.S."/>
        </authorList>
    </citation>
    <scope>PROTEOLYTIC PROCESSING</scope>
    <scope>MUTAGENESIS OF 461-LEU--SER-463</scope>
</reference>
<reference key="16">
    <citation type="journal article" date="2012" name="J. Biol. Chem.">
        <title>Processing and topology of the yeast mitochondrial phosphatidylserine decarboxylase 1.</title>
        <authorList>
            <person name="Horvath S.E."/>
            <person name="Boettinger L."/>
            <person name="Voegtle F.N."/>
            <person name="Wiedemann N."/>
            <person name="Meisinger C."/>
            <person name="Becker T."/>
            <person name="Daum G."/>
        </authorList>
    </citation>
    <scope>MUTAGENESIS OF SER-463 AND 81-VAL--SER-100</scope>
    <scope>SUBCELLULAR LOCATION</scope>
    <scope>TOPOLOGY</scope>
</reference>
<reference key="17">
    <citation type="journal article" date="2012" name="J. Biol. Chem.">
        <title>Phosphatidylserine decarboxylase 1 (Psd1) promotes mitochondrial fusion by regulating the biophysical properties of the mitochondrial membrane and alternative topogenesis of mitochondrial genome maintenance protein 1 (Mgm1).</title>
        <authorList>
            <person name="Chan E.Y."/>
            <person name="McQuibban G.A."/>
        </authorList>
    </citation>
    <scope>FUNCTION</scope>
</reference>
<reference key="18">
    <citation type="journal article" date="2012" name="J. Biol. Chem.">
        <title>Phosphatidylethanolamine biosynthesis in mitochondria: phosphatidylserine (PS) trafficking is independent of a PS decarboxylase and intermembrane space proteins UPS1P and UPS2P.</title>
        <authorList>
            <person name="Tamura Y."/>
            <person name="Onguka O."/>
            <person name="Itoh K."/>
            <person name="Endo T."/>
            <person name="Iijima M."/>
            <person name="Claypool S.M."/>
            <person name="Sesaki H."/>
        </authorList>
    </citation>
    <scope>FUNCTION</scope>
    <scope>CATALYTIC ACTIVITY</scope>
    <scope>SUBCELLULAR LOCATION</scope>
</reference>
<reference key="19">
    <citation type="journal article" date="2013" name="PLoS ONE">
        <title>Transcriptional response to deletion of the phosphatidylserine decarboxylase Psd1p in the yeast Saccharomyces cerevisiae.</title>
        <authorList>
            <person name="Gsell M."/>
            <person name="Mascher G."/>
            <person name="Schuiki I."/>
            <person name="Ploier B."/>
            <person name="Hrastnik C."/>
            <person name="Daum G."/>
        </authorList>
    </citation>
    <scope>DISRUPTION PHENOTYPE</scope>
</reference>
<reference key="20">
    <citation type="journal article" date="2015" name="J. Biol. Chem.">
        <title>Phosphatidylserine decarboxylase 1 autocatalysis and function does not require a mitochondrial-specific factor.</title>
        <authorList>
            <person name="Onguka O."/>
            <person name="Calzada E."/>
            <person name="Ogunbona O.B."/>
            <person name="Claypool S.M."/>
        </authorList>
    </citation>
    <scope>FUNCTION</scope>
    <scope>MUTAGENESIS OF LEU-461; GLY-462; SER-463 AND THR-464</scope>
</reference>
<reference key="21">
    <citation type="journal article" date="2017" name="Biochim. Biophys. Acta">
        <title>Involvement of a putative substrate binding site in the biogenesis and assembly of phosphatidylserine decarboxylase 1 from Saccharomyces cerevisiae.</title>
        <authorList>
            <person name="Di Bartolomeo F."/>
            <person name="Doan K.N."/>
            <person name="Athenstaedt K."/>
            <person name="Becker T."/>
            <person name="Daum G."/>
        </authorList>
    </citation>
    <scope>DISRUPTION PHENOTYPE</scope>
    <scope>MUTAGENESIS OF SER-463; 475-PHE--LYS-486; 479-VAL--VAL-481; 480-ARG--LYS-486; 480-ARG--VAL-485; 482-GLY--LYS-484; GLY-482; 483-ASP-LYS-484; LYS-486; GLY-488; 491-LEU-GLY-492 AND GLY-492</scope>
</reference>
<reference evidence="32" key="22">
    <citation type="journal article" date="2018" name="Dev. Cell">
        <title>Lipid Homeostasis Is Maintained by Dual Targeting of the Mitochondrial PE Biosynthesis Enzyme to the ER.</title>
        <authorList>
            <person name="Friedman J.R."/>
            <person name="Kannan M."/>
            <person name="Toulmay A."/>
            <person name="Jan C.H."/>
            <person name="Weissman J.S."/>
            <person name="Prinz W.A."/>
            <person name="Nunnari J."/>
        </authorList>
    </citation>
    <scope>FUNCTION</scope>
    <scope>CATALYTIC ACTIVITY</scope>
    <scope>SUBCELLULAR LOCATION</scope>
    <scope>GLYCOSYLATION AT ASN-34</scope>
    <scope>MUTAGENESIS OF SER-463</scope>
    <source>
        <strain evidence="28">ATCC 200060 / W303</strain>
    </source>
</reference>
<reference key="23">
    <citation type="journal article" date="2019" name="J. Cell Sci.">
        <title>The mitochondrial phosphatidylserine decarboxylase Psd1 is involved in nitrogen starvation-induced mitophagy in yeast.</title>
        <authorList>
            <person name="Vigie P."/>
            <person name="Cougouilles E."/>
            <person name="Bhatia-Kissova I."/>
            <person name="Salin B."/>
            <person name="Blancard C."/>
            <person name="Camougrand N."/>
        </authorList>
    </citation>
    <scope>FUNCTION</scope>
    <scope>DISRUPTION PHENOTYPE</scope>
</reference>
<reference key="24">
    <citation type="journal article" date="2019" name="Life. Sci Alliance">
        <title>PISD is a mitochondrial disease gene causing skeletal dysplasia, cataracts, and white matter changes.</title>
        <authorList>
            <consortium name="Care4Rare Canada Consortium"/>
            <person name="Zhao T."/>
            <person name="Goedhart C.M."/>
            <person name="Sam P.N."/>
            <person name="Sabouny R."/>
            <person name="Lingrell S."/>
            <person name="Cornish A.J."/>
            <person name="Lamont R.E."/>
            <person name="Bernier F.P."/>
            <person name="Sinasac D."/>
            <person name="Parboosingh J.S."/>
            <person name="Vance J.E."/>
            <person name="Claypool S.M."/>
            <person name="Innes A.M."/>
            <person name="Shutt T.E."/>
        </authorList>
    </citation>
    <scope>PROTEOLYTIC CLEAVAGE</scope>
    <scope>MUTAGENESIS OF ARG-358</scope>
</reference>
<reference evidence="32" key="25">
    <citation type="journal article" date="2019" name="Nat. Commun.">
        <title>Phosphatidylethanolamine made in the inner mitochondrial membrane is essential for yeast cytochrome bc1 complex function.</title>
        <authorList>
            <person name="Calzada E."/>
            <person name="Avery E."/>
            <person name="Sam P.N."/>
            <person name="Modak A."/>
            <person name="Wang C."/>
            <person name="McCaffery J.M."/>
            <person name="Han X."/>
            <person name="Alder N.N."/>
            <person name="Claypool S.M."/>
        </authorList>
    </citation>
    <scope>FUNCTION</scope>
    <scope>DISRUPTION PHENOTYPE</scope>
</reference>
<reference evidence="32" key="26">
    <citation type="journal article" date="2021" name="IScience">
        <title>Impaired phosphatidylethanolamine metabolism activates a reversible stress response that detects and resolves mutant mitochondrial precursors.</title>
        <authorList>
            <person name="Sam P.N."/>
            <person name="Calzada E."/>
            <person name="Acoba M.G."/>
            <person name="Zhao T."/>
            <person name="Watanabe Y."/>
            <person name="Nejatfard A."/>
            <person name="Trinidad J.C."/>
            <person name="Shutt T.E."/>
            <person name="Neal S.E."/>
            <person name="Claypool S.M."/>
        </authorList>
    </citation>
    <scope>SUBCELLULAR LOCATION</scope>
    <scope>MUTAGENESIS OF ARG-189; ARG-196; ASP-210; LYS-230; HIS-345; HIS-346; ARG-385; 402-VAL--THR-405; 407-VAL--ILE-410; 461-LEU--SER-463 AND SER-463</scope>
    <source>
        <strain evidence="29">ATCC 200060 / W303</strain>
        <strain evidence="29">GA74-1A</strain>
    </source>
</reference>
<reference evidence="32" key="27">
    <citation type="journal article" date="2022" name="Mol. Biol. Cell">
        <title>ER-localized phosphatidylethanolamine synthase plays a conserved role in lipid droplet formation.</title>
        <authorList>
            <person name="Gok M.O."/>
            <person name="Speer N.O."/>
            <person name="Henne W.M."/>
            <person name="Friedman J.R."/>
        </authorList>
    </citation>
    <scope>FUNCTION</scope>
    <scope>SUBCELLULAR LOCATION</scope>
    <scope>DISRUPTION PHENOTYPE</scope>
    <source>
        <strain evidence="30">ATCC 200060 / W303</strain>
    </source>
</reference>
<protein>
    <recommendedName>
        <fullName evidence="2 40">Phosphatidylserine decarboxylase proenzyme 1, mitochondrial</fullName>
        <ecNumber evidence="2 23 33">4.1.1.65</ecNumber>
    </recommendedName>
    <component>
        <recommendedName>
            <fullName evidence="2 34">Phosphatidylserine decarboxylase 1 beta chain</fullName>
        </recommendedName>
    </component>
    <component>
        <recommendedName>
            <fullName evidence="2 34">Phosphatidylserine decarboxylase 1 alpha chain</fullName>
        </recommendedName>
    </component>
</protein>
<sequence>MSIMPVKNALAQGRTLLMGRMPAVKFSTRMQLRNRTAVLWNRKFSTRLFVQQRRSSGEIVDRAKAAAANSGRKQVSMKWVVLTSFTIVLGTILLVSRNDSTEEDATEGKKGRRTRKIKIFNNNWLFFCYSTLPLNAMSRLWGQVNSLTLPIWVRPWGYRLYSFLFGVNLDEMEDPDLTHYANLSEFFYRNIKPGTRPVAQGEDVIASPSDGKILQVGIINSETGEIEQVKGMTYSIKEFLGTHSHPLMSKSASSLDLTSDEEKHREFARVNRIQLAGSEDTEQPLLNFKNEGDQSVREFKPSVSKNIHLLSQLSLNYFSNGFSCSEPHDTELFFAVIYLAPGDYHHFHSPVDWVCKVRRHFPGDLFSVAPYFQRNFPNLFVLNERVALLGSWKYGFFSMTPVGATNVGSIKLNFDQEFVTNSKSDKHLEPHTCYQAVYENASKILGGMPLVKGEEMGGFELGSTVVLCFEAPTEFKFDVRVGDKVKMGQKLGIIGKNDLK</sequence>
<feature type="transit peptide" description="Mitochondrion; not cleaved when targeted to the endoplasmic reticulum" evidence="1 36">
    <location>
        <begin position="1"/>
        <end position="48"/>
    </location>
</feature>
<feature type="chain" id="PRO_0000029843" description="Phosphatidylserine decarboxylase proenzyme 1, mitochondrial">
    <location>
        <begin position="45"/>
        <end position="500"/>
    </location>
</feature>
<feature type="chain" id="PRO_0000029844" description="Phosphatidylserine decarboxylase 1 beta chain" evidence="2">
    <location>
        <begin position="45"/>
        <end position="462"/>
    </location>
</feature>
<feature type="chain" id="PRO_0000029845" description="Phosphatidylserine decarboxylase 1 alpha chain" evidence="2">
    <location>
        <begin position="463"/>
        <end position="500"/>
    </location>
</feature>
<feature type="topological domain" description="Mitochondrial matrix" evidence="2 35">
    <location>
        <begin position="45"/>
        <end position="79"/>
    </location>
</feature>
<feature type="transmembrane region" description="Helical" evidence="2">
    <location>
        <begin position="80"/>
        <end position="98"/>
    </location>
</feature>
<feature type="topological domain" description="Mitochondrial intermembrane" evidence="2 35">
    <location>
        <begin position="99"/>
        <end position="500"/>
    </location>
</feature>
<feature type="region of interest" description="Enables targeting to the endoplasmic reticulum in addition to mitochondria" evidence="16">
    <location>
        <begin position="57"/>
        <end position="101"/>
    </location>
</feature>
<feature type="region of interest" description="Required for processing and stability" evidence="15">
    <location>
        <begin position="475"/>
        <end position="492"/>
    </location>
</feature>
<feature type="active site" description="Charge relay system; for autoendoproteolytic cleavage activity" evidence="2">
    <location>
        <position position="210"/>
    </location>
</feature>
<feature type="active site" description="Charge relay system; for autoendoproteolytic cleavage activity" evidence="2">
    <location>
        <position position="348"/>
    </location>
</feature>
<feature type="active site" description="Charge relay system; for autoendoproteolytic cleavage activity" evidence="2">
    <location>
        <position position="463"/>
    </location>
</feature>
<feature type="active site" description="Schiff-base intermediate with substrate; via pyruvic acid; for decarboxylase activity" evidence="2">
    <location>
        <position position="463"/>
    </location>
</feature>
<feature type="site" description="Cleavage (non-hydrolytic); by autocatalysis" evidence="2">
    <location>
        <begin position="462"/>
        <end position="463"/>
    </location>
</feature>
<feature type="modified residue" description="Pyruvic acid (Ser); by autocatalysis" evidence="2">
    <location>
        <position position="463"/>
    </location>
</feature>
<feature type="glycosylation site" description="N-linked (GlcNAc...) asparagine" evidence="3 36">
    <location>
        <position position="34"/>
    </location>
</feature>
<feature type="mutagenesis site" description="In PSD1deltaIM; Mislocalizes to the mitochondrial matrix." evidence="10">
    <location>
        <begin position="81"/>
        <end position="100"/>
    </location>
</feature>
<feature type="mutagenesis site" description="Impaired processing of the proenzyme." evidence="21">
    <original>R</original>
    <variation>A</variation>
    <location>
        <position position="189"/>
    </location>
</feature>
<feature type="mutagenesis site" description="No processing of the proenzyme." evidence="21">
    <original>R</original>
    <variation>A</variation>
    <location>
        <position position="196"/>
    </location>
</feature>
<feature type="mutagenesis site" description="No processing of the proenzyme. Increases protein localization to the endoplasmic reticulum; when associated with A-345 and A-463." evidence="21">
    <original>D</original>
    <variation>A</variation>
    <location>
        <position position="210"/>
    </location>
</feature>
<feature type="mutagenesis site" description="Impaired processing of the proenzyme." evidence="21">
    <original>K</original>
    <variation>A</variation>
    <location>
        <position position="230"/>
    </location>
</feature>
<feature type="mutagenesis site" description="No processing of the proenzyme. Increases protein localization to the endoplasmic reticulum; when associated with A-210 and A-463." evidence="21">
    <original>H</original>
    <variation>A</variation>
    <location>
        <position position="345"/>
    </location>
</feature>
<feature type="mutagenesis site" description="Impaired processing of the proenzyme." evidence="21">
    <original>H</original>
    <variation>A</variation>
    <location>
        <position position="346"/>
    </location>
</feature>
<feature type="mutagenesis site" description="Changed autocatalytic proteolysis." evidence="19">
    <original>R</original>
    <variation>Q</variation>
    <location>
        <position position="358"/>
    </location>
</feature>
<feature type="mutagenesis site" description="No processing of the proenzyme." evidence="21">
    <original>R</original>
    <variation>A</variation>
    <location>
        <position position="385"/>
    </location>
</feature>
<feature type="mutagenesis site" description="No processing of the proenzyme." evidence="21">
    <original>VGAT</original>
    <variation>AAAA</variation>
    <location>
        <begin position="402"/>
        <end position="405"/>
    </location>
</feature>
<feature type="mutagenesis site" description="No processing of the proenzyme." evidence="21">
    <original>VGSI</original>
    <variation>AAAA</variation>
    <location>
        <begin position="407"/>
        <end position="410"/>
    </location>
</feature>
<feature type="mutagenesis site" description="No processing of the proenzyme, complete loss of activity." evidence="9 21">
    <original>LGS</original>
    <variation>AAA</variation>
    <location>
        <begin position="461"/>
        <end position="463"/>
    </location>
</feature>
<feature type="mutagenesis site" description="No effect." evidence="14">
    <original>L</original>
    <variation>A</variation>
    <location>
        <position position="461"/>
    </location>
</feature>
<feature type="mutagenesis site" description="Significantly impairs processing of the proenzyme, retains some activity." evidence="14">
    <original>G</original>
    <variation>A</variation>
    <location>
        <position position="462"/>
    </location>
</feature>
<feature type="mutagenesis site" description="No processing of the proenzyme, complete loss of activity. Increases protein localization to the endoplasmic reticulum; when associated with A-210 and A-345." evidence="10 14 15 16 21">
    <original>S</original>
    <variation>A</variation>
    <location>
        <position position="463"/>
    </location>
</feature>
<feature type="mutagenesis site" description="No effect." evidence="14">
    <original>T</original>
    <variation>I</variation>
    <location>
        <position position="464"/>
    </location>
</feature>
<feature type="mutagenesis site" description="Loss of autocatalytic processing and leads to protein degradation. Complete loss of activity. Growth on the fermentable carbon source galactose is severely decreased." evidence="15">
    <location>
        <begin position="475"/>
        <end position="486"/>
    </location>
</feature>
<feature type="mutagenesis site" description="Loss of autocatalytic processing and leads to protein degradation. Complete loss of activity. Growth on the fermentable carbon source galactose is severely decreased." evidence="15">
    <location>
        <begin position="479"/>
        <end position="481"/>
    </location>
</feature>
<feature type="mutagenesis site" description="Impairs processing of the proenzyme and increases protein degradation. Decreases activity." evidence="15">
    <original>RVGDKVK</original>
    <variation>AVGDAVA</variation>
    <location>
        <begin position="480"/>
        <end position="486"/>
    </location>
</feature>
<feature type="mutagenesis site" description="Loss of autocatalytic processing and leads to protein degradation. Complete loss of activity. Growth on the fermentable carbon source galactose is moderately decreased." evidence="15">
    <location>
        <begin position="480"/>
        <end position="485"/>
    </location>
</feature>
<feature type="mutagenesis site" description="Loss of autocatalytic processing and leads to protein degradation. Complete loss of activity. Growth on the fermentable carbon source galactose is severely decreased." evidence="15">
    <location>
        <begin position="482"/>
        <end position="484"/>
    </location>
</feature>
<feature type="mutagenesis site" description="Increases protein degradation." evidence="15">
    <original>G</original>
    <variation>P</variation>
    <location>
        <position position="482"/>
    </location>
</feature>
<feature type="mutagenesis site" description="Impairs processing of the proenzyme. Decreases activity." evidence="15">
    <location>
        <begin position="483"/>
        <end position="484"/>
    </location>
</feature>
<feature type="mutagenesis site" description="Impairs processing of the proenzyme and increases protein degradation. Decreases activity." evidence="15">
    <original>K</original>
    <variation>A</variation>
    <location>
        <position position="486"/>
    </location>
</feature>
<feature type="mutagenesis site" description="Loss of autocatalytic processing and leads to protein degradation. Complete loss of activity. Growth on the fermentable carbon source galactose is severely decreased." evidence="15">
    <original>G</original>
    <variation>P</variation>
    <location>
        <position position="488"/>
    </location>
</feature>
<feature type="mutagenesis site" description="Increases protein degradation. Decreases activity." evidence="15">
    <location>
        <begin position="491"/>
        <end position="492"/>
    </location>
</feature>
<feature type="mutagenesis site" description="Increases protein degradation. Decreases activity." evidence="15">
    <original>G</original>
    <variation>P</variation>
    <location>
        <position position="492"/>
    </location>
</feature>
<comment type="function">
    <text evidence="2 4 8 11 12 14 16 20 22 24 25 26">Catalyzes the formation of phosphatidylethanolamine (PtdEtn) from phosphatidylserine (PtdSer). Plays a central role in phospholipid metabolism and in the interorganelle trafficking of phosphatidylserine (PubMed:17976194, PubMed:23124206, PubMed:25829489, PubMed:29290583, PubMed:8227017, PubMed:8407984). Phosphatidylethanolamine formed in the mitochondria is exported to other membranes to fullfill their requirements for PtdEtn (PubMed:11294902, PubMed:29290583, PubMed:8530379). Required for normal mitochondrial morphology and proper mitochondrial fusion during yeast mating (PubMed:23045528). Involved in lipid droplet biogenesis at the endoplasmic reticulum membrane (PubMed:34818062). Required for induction of mitophagy during nitrogen starvation (PubMed:30510114). Appears to play a specific role in supporting respiratory complex III activity (PubMed:30926815).</text>
</comment>
<comment type="catalytic activity">
    <reaction evidence="2 12 23 33 41">
        <text>a 1,2-diacyl-sn-glycero-3-phospho-L-serine + H(+) = a 1,2-diacyl-sn-glycero-3-phosphoethanolamine + CO2</text>
        <dbReference type="Rhea" id="RHEA:20828"/>
        <dbReference type="ChEBI" id="CHEBI:15378"/>
        <dbReference type="ChEBI" id="CHEBI:16526"/>
        <dbReference type="ChEBI" id="CHEBI:57262"/>
        <dbReference type="ChEBI" id="CHEBI:64612"/>
        <dbReference type="EC" id="4.1.1.65"/>
    </reaction>
</comment>
<comment type="cofactor">
    <cofactor evidence="2">
        <name>pyruvate</name>
        <dbReference type="ChEBI" id="CHEBI:15361"/>
    </cofactor>
    <text evidence="2">Binds 1 pyruvoyl group covalently per subunit.</text>
</comment>
<comment type="pathway">
    <text evidence="2 41">Phospholipid metabolism; phosphatidylethanolamine biosynthesis; phosphatidylethanolamine from CDP-diacylglycerol: step 2/2.</text>
</comment>
<comment type="subunit">
    <text evidence="2">Heterodimer of a large membrane-associated beta subunit and a small pyruvoyl-containing alpha subunit.</text>
</comment>
<comment type="subcellular location">
    <molecule>Phosphatidylserine decarboxylase 1 beta chain</molecule>
    <subcellularLocation>
        <location evidence="2 7 10 12 16 17 21 39">Mitochondrion inner membrane</location>
        <topology evidence="2 35">Single-pass membrane protein</topology>
        <orientation evidence="2 5 7 10 12">Intermembrane side</orientation>
    </subcellularLocation>
</comment>
<comment type="subcellular location">
    <molecule>Phosphatidylserine decarboxylase 1 alpha chain</molecule>
    <subcellularLocation>
        <location evidence="2 7 10 12 16 17 39">Mitochondrion inner membrane</location>
        <topology evidence="2 10">Peripheral membrane protein</topology>
        <orientation evidence="2 5 7 10 12">Intermembrane side</orientation>
    </subcellularLocation>
    <text evidence="2 10">Anchored to the mitochondrial inner membrane through its interaction with the integral membrane beta chain.</text>
</comment>
<comment type="subcellular location">
    <subcellularLocation>
        <location evidence="22">Lipid droplet</location>
    </subcellularLocation>
    <subcellularLocation>
        <location evidence="16 22">Endoplasmic reticulum membrane</location>
    </subcellularLocation>
    <text evidence="22">Localizes to sites of lipid droplet formation on the endoplasmic reticulum membrane.</text>
</comment>
<comment type="induction">
    <text evidence="27">Repressed by inositol.</text>
</comment>
<comment type="PTM">
    <text evidence="16">Glycosylated at Asn-34 in the endoplasmic reticulum.</text>
</comment>
<comment type="PTM">
    <text evidence="10 33">The precursor is imported via the TOM complex into mitochondria, where the N-terminal presequence is cleaved by the matrix-located proteases MPP (MAS1-MAS2) and OCT1.</text>
</comment>
<comment type="PTM">
    <text evidence="2 34 37">Is synthesized initially as an inactive proenzyme. Formation of the active enzyme involves a self-maturation process in which the active site pyruvoyl group is generated from an internal serine residue via an autocatalytic post-translational modification. Two non-identical subunits are generated from the proenzyme in this reaction, and the pyruvate is formed at the N-terminus of the alpha chain, which is derived from the carboxyl end of the proenzyme (PubMed:25829489, PubMed:30858161). The autoendoproteolytic cleavage occurs by a canonical serine protease mechanism, in which the side chain hydroxyl group of the serine supplies its oxygen atom to form the C-terminus of the beta chain, while the remainder of the serine residue undergoes an oxidative deamination to produce ammonia and the pyruvoyl prosthetic group on the alpha chain. During this reaction, the Ser that is part of the protease active site of the proenzyme becomes the pyruvoyl prosthetic group, which constitutes an essential element of the active site of the mature decarboxylase (By similarity).</text>
</comment>
<comment type="disruption phenotype">
    <text evidence="13 15 18 20 22 27">The cellular level of phosphatidylethanolamine is decreased, and phosphatidylcholine levels are increased (PubMed:24146988, PubMed:30926815, PubMed:9294443). Decreases induction of mitophagy in nitrogen starvation following growth on a respiratory carbon source; recruitment of ATG8 to mitochondria is impaired (PubMed:30510114). Growth on non-fermentable carbon sources is severely decreased (lactate, ethanol and glycerol) (PubMed:24146988, PubMed:30926815, PubMed:34818062). Growth on the fermentable carbon source galactose is severely decreased (PubMed:28473294). Increases RNA level of genes involved in transport, generation of precursor metabolites and energy, carbohydrate metabolism, and stress responses (PubMed:24146988). Leads to respiratory defects; respiratory complex III and IV activity is impaired (PubMed:30926815). Simultaneous disruption of PSD2 exacerbates respiratory defects (PubMed:30926815).</text>
</comment>
<comment type="miscellaneous">
    <text evidence="6">Present with 1080 molecules/cell in log phase SD medium.</text>
</comment>
<comment type="similarity">
    <text evidence="2">Belongs to the phosphatidylserine decarboxylase family. PSD-B subfamily. Eukaryotic type I sub-subfamily.</text>
</comment>
<comment type="caution">
    <text evidence="38 39">Functional localization of the protein to the endoplasmic reticulum (ER) has been disputed. ER-localization of the enzyme may be difficult to detect in nutrient-rich or respiratory-demanding growth conditions.</text>
</comment>
<name>PSD1_YEAST</name>
<evidence type="ECO:0000255" key="1"/>
<evidence type="ECO:0000255" key="2">
    <source>
        <dbReference type="HAMAP-Rule" id="MF_03208"/>
    </source>
</evidence>
<evidence type="ECO:0000255" key="3">
    <source>
        <dbReference type="PROSITE-ProRule" id="PRU00498"/>
    </source>
</evidence>
<evidence type="ECO:0000269" key="4">
    <source>
    </source>
</evidence>
<evidence type="ECO:0000269" key="5">
    <source>
    </source>
</evidence>
<evidence type="ECO:0000269" key="6">
    <source>
    </source>
</evidence>
<evidence type="ECO:0000269" key="7">
    <source>
    </source>
</evidence>
<evidence type="ECO:0000269" key="8">
    <source>
    </source>
</evidence>
<evidence type="ECO:0000269" key="9">
    <source>
    </source>
</evidence>
<evidence type="ECO:0000269" key="10">
    <source>
    </source>
</evidence>
<evidence type="ECO:0000269" key="11">
    <source>
    </source>
</evidence>
<evidence type="ECO:0000269" key="12">
    <source>
    </source>
</evidence>
<evidence type="ECO:0000269" key="13">
    <source>
    </source>
</evidence>
<evidence type="ECO:0000269" key="14">
    <source>
    </source>
</evidence>
<evidence type="ECO:0000269" key="15">
    <source>
    </source>
</evidence>
<evidence type="ECO:0000269" key="16">
    <source>
    </source>
</evidence>
<evidence type="ECO:0000269" key="17">
    <source>
    </source>
</evidence>
<evidence type="ECO:0000269" key="18">
    <source>
    </source>
</evidence>
<evidence type="ECO:0000269" key="19">
    <source>
    </source>
</evidence>
<evidence type="ECO:0000269" key="20">
    <source>
    </source>
</evidence>
<evidence type="ECO:0000269" key="21">
    <source>
    </source>
</evidence>
<evidence type="ECO:0000269" key="22">
    <source>
    </source>
</evidence>
<evidence type="ECO:0000269" key="23">
    <source>
    </source>
</evidence>
<evidence type="ECO:0000269" key="24">
    <source>
    </source>
</evidence>
<evidence type="ECO:0000269" key="25">
    <source>
    </source>
</evidence>
<evidence type="ECO:0000269" key="26">
    <source>
    </source>
</evidence>
<evidence type="ECO:0000269" key="27">
    <source>
    </source>
</evidence>
<evidence type="ECO:0000303" key="28">
    <source>
    </source>
</evidence>
<evidence type="ECO:0000303" key="29">
    <source>
    </source>
</evidence>
<evidence type="ECO:0000303" key="30">
    <source>
    </source>
</evidence>
<evidence type="ECO:0000303" key="31">
    <source>
    </source>
</evidence>
<evidence type="ECO:0000305" key="32"/>
<evidence type="ECO:0000305" key="33">
    <source>
    </source>
</evidence>
<evidence type="ECO:0000305" key="34">
    <source>
    </source>
</evidence>
<evidence type="ECO:0000305" key="35">
    <source>
    </source>
</evidence>
<evidence type="ECO:0000305" key="36">
    <source>
    </source>
</evidence>
<evidence type="ECO:0000305" key="37">
    <source>
    </source>
</evidence>
<evidence type="ECO:0000305" key="38">
    <source>
    </source>
</evidence>
<evidence type="ECO:0000305" key="39">
    <source>
    </source>
</evidence>
<evidence type="ECO:0000305" key="40">
    <source>
    </source>
</evidence>
<evidence type="ECO:0000305" key="41">
    <source>
    </source>
</evidence>
<evidence type="ECO:0000312" key="42">
    <source>
        <dbReference type="SGD" id="S000005113"/>
    </source>
</evidence>
<keyword id="KW-0210">Decarboxylase</keyword>
<keyword id="KW-0256">Endoplasmic reticulum</keyword>
<keyword id="KW-0325">Glycoprotein</keyword>
<keyword id="KW-0444">Lipid biosynthesis</keyword>
<keyword id="KW-0551">Lipid droplet</keyword>
<keyword id="KW-0443">Lipid metabolism</keyword>
<keyword id="KW-0456">Lyase</keyword>
<keyword id="KW-0472">Membrane</keyword>
<keyword id="KW-0496">Mitochondrion</keyword>
<keyword id="KW-0999">Mitochondrion inner membrane</keyword>
<keyword id="KW-0594">Phospholipid biosynthesis</keyword>
<keyword id="KW-1208">Phospholipid metabolism</keyword>
<keyword id="KW-0670">Pyruvate</keyword>
<keyword id="KW-1185">Reference proteome</keyword>
<keyword id="KW-0809">Transit peptide</keyword>
<keyword id="KW-0812">Transmembrane</keyword>
<keyword id="KW-1133">Transmembrane helix</keyword>
<keyword id="KW-0865">Zymogen</keyword>
<accession>P39006</accession>
<accession>D6W113</accession>
<proteinExistence type="evidence at protein level"/>
<dbReference type="EC" id="4.1.1.65" evidence="2 23 33"/>
<dbReference type="EMBL" id="L20973">
    <property type="protein sequence ID" value="AAA34918.1"/>
    <property type="molecule type" value="Genomic_DNA"/>
</dbReference>
<dbReference type="EMBL" id="Z71444">
    <property type="protein sequence ID" value="CAA96056.1"/>
    <property type="molecule type" value="Genomic_DNA"/>
</dbReference>
<dbReference type="EMBL" id="Z71448">
    <property type="protein sequence ID" value="CAA96063.1"/>
    <property type="molecule type" value="Genomic_DNA"/>
</dbReference>
<dbReference type="EMBL" id="X92517">
    <property type="protein sequence ID" value="CAA63270.1"/>
    <property type="molecule type" value="Genomic_DNA"/>
</dbReference>
<dbReference type="EMBL" id="BK006947">
    <property type="protein sequence ID" value="DAA10379.1"/>
    <property type="molecule type" value="Genomic_DNA"/>
</dbReference>
<dbReference type="PIR" id="A48053">
    <property type="entry name" value="A48053"/>
</dbReference>
<dbReference type="RefSeq" id="NP_014230.1">
    <property type="nucleotide sequence ID" value="NM_001183007.1"/>
</dbReference>
<dbReference type="SMR" id="P39006"/>
<dbReference type="BioGRID" id="35659">
    <property type="interactions" value="562"/>
</dbReference>
<dbReference type="DIP" id="DIP-4599N"/>
<dbReference type="FunCoup" id="P39006">
    <property type="interactions" value="608"/>
</dbReference>
<dbReference type="IntAct" id="P39006">
    <property type="interactions" value="7"/>
</dbReference>
<dbReference type="MINT" id="P39006"/>
<dbReference type="STRING" id="4932.YNL169C"/>
<dbReference type="GlyGen" id="P39006">
    <property type="glycosylation" value="1 site"/>
</dbReference>
<dbReference type="iPTMnet" id="P39006"/>
<dbReference type="PaxDb" id="4932-YNL169C"/>
<dbReference type="PeptideAtlas" id="P39006"/>
<dbReference type="EnsemblFungi" id="YNL169C_mRNA">
    <property type="protein sequence ID" value="YNL169C"/>
    <property type="gene ID" value="YNL169C"/>
</dbReference>
<dbReference type="GeneID" id="855552"/>
<dbReference type="KEGG" id="sce:YNL169C"/>
<dbReference type="AGR" id="SGD:S000005113"/>
<dbReference type="SGD" id="S000005113">
    <property type="gene designation" value="PSD1"/>
</dbReference>
<dbReference type="VEuPathDB" id="FungiDB:YNL169C"/>
<dbReference type="eggNOG" id="KOG2420">
    <property type="taxonomic scope" value="Eukaryota"/>
</dbReference>
<dbReference type="GeneTree" id="ENSGT00390000013484"/>
<dbReference type="HOGENOM" id="CLU_029061_1_0_1"/>
<dbReference type="InParanoid" id="P39006"/>
<dbReference type="OMA" id="HSPASWV"/>
<dbReference type="OrthoDB" id="4330at2759"/>
<dbReference type="BioCyc" id="YEAST:YNL169C-MONOMER"/>
<dbReference type="BRENDA" id="4.1.1.65">
    <property type="organism ID" value="984"/>
</dbReference>
<dbReference type="UniPathway" id="UPA00558">
    <property type="reaction ID" value="UER00616"/>
</dbReference>
<dbReference type="BioGRID-ORCS" id="855552">
    <property type="hits" value="2 hits in 10 CRISPR screens"/>
</dbReference>
<dbReference type="PRO" id="PR:P39006"/>
<dbReference type="Proteomes" id="UP000002311">
    <property type="component" value="Chromosome XIV"/>
</dbReference>
<dbReference type="RNAct" id="P39006">
    <property type="molecule type" value="protein"/>
</dbReference>
<dbReference type="GO" id="GO:0005789">
    <property type="term" value="C:endoplasmic reticulum membrane"/>
    <property type="evidence" value="ECO:0000314"/>
    <property type="project" value="UniProtKB"/>
</dbReference>
<dbReference type="GO" id="GO:0005811">
    <property type="term" value="C:lipid droplet"/>
    <property type="evidence" value="ECO:0000314"/>
    <property type="project" value="UniProtKB"/>
</dbReference>
<dbReference type="GO" id="GO:0005743">
    <property type="term" value="C:mitochondrial inner membrane"/>
    <property type="evidence" value="ECO:0000314"/>
    <property type="project" value="UniProtKB"/>
</dbReference>
<dbReference type="GO" id="GO:0005739">
    <property type="term" value="C:mitochondrion"/>
    <property type="evidence" value="ECO:0000314"/>
    <property type="project" value="UniProtKB"/>
</dbReference>
<dbReference type="GO" id="GO:0004609">
    <property type="term" value="F:phosphatidylserine decarboxylase activity"/>
    <property type="evidence" value="ECO:0000314"/>
    <property type="project" value="SGD"/>
</dbReference>
<dbReference type="GO" id="GO:0140042">
    <property type="term" value="P:lipid droplet formation"/>
    <property type="evidence" value="ECO:0000314"/>
    <property type="project" value="SGD"/>
</dbReference>
<dbReference type="GO" id="GO:0006122">
    <property type="term" value="P:mitochondrial electron transport, ubiquinol to cytochrome c"/>
    <property type="evidence" value="ECO:0000315"/>
    <property type="project" value="SGD"/>
</dbReference>
<dbReference type="GO" id="GO:0006656">
    <property type="term" value="P:phosphatidylcholine biosynthetic process"/>
    <property type="evidence" value="ECO:0000314"/>
    <property type="project" value="SGD"/>
</dbReference>
<dbReference type="GO" id="GO:0006646">
    <property type="term" value="P:phosphatidylethanolamine biosynthetic process"/>
    <property type="evidence" value="ECO:0000315"/>
    <property type="project" value="UniProtKB"/>
</dbReference>
<dbReference type="GO" id="GO:0010636">
    <property type="term" value="P:positive regulation of mitochondrial fusion"/>
    <property type="evidence" value="ECO:0000315"/>
    <property type="project" value="SGD"/>
</dbReference>
<dbReference type="GO" id="GO:0010954">
    <property type="term" value="P:positive regulation of protein processing"/>
    <property type="evidence" value="ECO:0000315"/>
    <property type="project" value="SGD"/>
</dbReference>
<dbReference type="GO" id="GO:0016540">
    <property type="term" value="P:protein autoprocessing"/>
    <property type="evidence" value="ECO:0000314"/>
    <property type="project" value="SGD"/>
</dbReference>
<dbReference type="HAMAP" id="MF_03208">
    <property type="entry name" value="PS_decarb_PSD_B_type1_euk"/>
    <property type="match status" value="1"/>
</dbReference>
<dbReference type="InterPro" id="IPR003817">
    <property type="entry name" value="PS_Dcarbxylase"/>
</dbReference>
<dbReference type="InterPro" id="IPR033177">
    <property type="entry name" value="PSD-B"/>
</dbReference>
<dbReference type="InterPro" id="IPR033661">
    <property type="entry name" value="PSD_type1_euk"/>
</dbReference>
<dbReference type="NCBIfam" id="TIGR00163">
    <property type="entry name" value="PS_decarb"/>
    <property type="match status" value="1"/>
</dbReference>
<dbReference type="PANTHER" id="PTHR10067">
    <property type="entry name" value="PHOSPHATIDYLSERINE DECARBOXYLASE"/>
    <property type="match status" value="1"/>
</dbReference>
<dbReference type="PANTHER" id="PTHR10067:SF6">
    <property type="entry name" value="PHOSPHATIDYLSERINE DECARBOXYLASE PROENZYME, MITOCHONDRIAL"/>
    <property type="match status" value="1"/>
</dbReference>
<dbReference type="Pfam" id="PF02666">
    <property type="entry name" value="PS_Dcarbxylase"/>
    <property type="match status" value="2"/>
</dbReference>